<dbReference type="EMBL" id="BX936398">
    <property type="protein sequence ID" value="CAH19362.1"/>
    <property type="status" value="ALT_INIT"/>
    <property type="molecule type" value="Genomic_DNA"/>
</dbReference>
<dbReference type="RefSeq" id="WP_002209476.1">
    <property type="nucleotide sequence ID" value="NZ_CP009712.1"/>
</dbReference>
<dbReference type="SMR" id="Q66G60"/>
<dbReference type="GeneID" id="96663601"/>
<dbReference type="KEGG" id="ypo:BZ17_2474"/>
<dbReference type="KEGG" id="yps:YPTB0122"/>
<dbReference type="PATRIC" id="fig|273123.14.peg.2593"/>
<dbReference type="Proteomes" id="UP000001011">
    <property type="component" value="Chromosome"/>
</dbReference>
<dbReference type="GO" id="GO:0005737">
    <property type="term" value="C:cytoplasm"/>
    <property type="evidence" value="ECO:0007669"/>
    <property type="project" value="UniProtKB-SubCell"/>
</dbReference>
<dbReference type="GO" id="GO:0003677">
    <property type="term" value="F:DNA binding"/>
    <property type="evidence" value="ECO:0007669"/>
    <property type="project" value="UniProtKB-KW"/>
</dbReference>
<dbReference type="GO" id="GO:0003700">
    <property type="term" value="F:DNA-binding transcription factor activity"/>
    <property type="evidence" value="ECO:0007669"/>
    <property type="project" value="UniProtKB-UniRule"/>
</dbReference>
<dbReference type="GO" id="GO:0006633">
    <property type="term" value="P:fatty acid biosynthetic process"/>
    <property type="evidence" value="ECO:0007669"/>
    <property type="project" value="UniProtKB-UniRule"/>
</dbReference>
<dbReference type="GO" id="GO:0045717">
    <property type="term" value="P:negative regulation of fatty acid biosynthetic process"/>
    <property type="evidence" value="ECO:0007669"/>
    <property type="project" value="UniProtKB-UniRule"/>
</dbReference>
<dbReference type="FunFam" id="1.10.10.60:FF:000034">
    <property type="entry name" value="HTH-type transcriptional repressor FabR"/>
    <property type="match status" value="1"/>
</dbReference>
<dbReference type="FunFam" id="1.10.357.10:FF:000001">
    <property type="entry name" value="HTH-type transcriptional repressor FabR"/>
    <property type="match status" value="1"/>
</dbReference>
<dbReference type="Gene3D" id="1.10.10.60">
    <property type="entry name" value="Homeodomain-like"/>
    <property type="match status" value="1"/>
</dbReference>
<dbReference type="Gene3D" id="1.10.357.10">
    <property type="entry name" value="Tetracycline Repressor, domain 2"/>
    <property type="match status" value="1"/>
</dbReference>
<dbReference type="HAMAP" id="MF_01190">
    <property type="entry name" value="HTH_type_FabR"/>
    <property type="match status" value="1"/>
</dbReference>
<dbReference type="InterPro" id="IPR054129">
    <property type="entry name" value="DesT_TetR_C"/>
</dbReference>
<dbReference type="InterPro" id="IPR009057">
    <property type="entry name" value="Homeodomain-like_sf"/>
</dbReference>
<dbReference type="InterPro" id="IPR001647">
    <property type="entry name" value="HTH_TetR"/>
</dbReference>
<dbReference type="InterPro" id="IPR050692">
    <property type="entry name" value="HTH_transcr_repressor_FabR"/>
</dbReference>
<dbReference type="InterPro" id="IPR023764">
    <property type="entry name" value="Tscrpt_reg_HTH_FabR"/>
</dbReference>
<dbReference type="NCBIfam" id="NF008402">
    <property type="entry name" value="PRK11202.1"/>
    <property type="match status" value="1"/>
</dbReference>
<dbReference type="PANTHER" id="PTHR47752">
    <property type="entry name" value="HTH-TYPE TRANSCRIPTIONAL REPRESSOR FABR"/>
    <property type="match status" value="1"/>
</dbReference>
<dbReference type="PANTHER" id="PTHR47752:SF1">
    <property type="entry name" value="HTH-TYPE TRANSCRIPTIONAL REPRESSOR FABR"/>
    <property type="match status" value="1"/>
</dbReference>
<dbReference type="Pfam" id="PF21943">
    <property type="entry name" value="TetR_C_46"/>
    <property type="match status" value="1"/>
</dbReference>
<dbReference type="Pfam" id="PF00440">
    <property type="entry name" value="TetR_N"/>
    <property type="match status" value="1"/>
</dbReference>
<dbReference type="SUPFAM" id="SSF46689">
    <property type="entry name" value="Homeodomain-like"/>
    <property type="match status" value="1"/>
</dbReference>
<dbReference type="PROSITE" id="PS50977">
    <property type="entry name" value="HTH_TETR_2"/>
    <property type="match status" value="1"/>
</dbReference>
<comment type="function">
    <text evidence="1">Represses the transcription of fabB, involved in unsaturated fatty acid (UFA) biosynthesis. By controlling UFA production, FabR directly influences the physical properties of the membrane bilayer.</text>
</comment>
<comment type="subunit">
    <text evidence="1">Homodimer.</text>
</comment>
<comment type="subcellular location">
    <subcellularLocation>
        <location evidence="1">Cytoplasm</location>
    </subcellularLocation>
</comment>
<comment type="sequence caution" evidence="2">
    <conflict type="erroneous initiation">
        <sequence resource="EMBL-CDS" id="CAH19362"/>
    </conflict>
</comment>
<gene>
    <name evidence="1" type="primary">fabR</name>
    <name type="ordered locus">YPTB0122</name>
</gene>
<name>FABR_YERPS</name>
<sequence length="211" mass="24167">MGVRAQQKERTRRSLIEAAFSQLSAERSFASLSLREVSREAGIAPTSFYRHFRDVDELGLTMVDESGLMLRQLMRQARQRIAKGGSVIRTSVSTFMEFIGNNPNAFRLLLRERSGTSAAFRAAVAREIQHFIAELADYLELENHMPRSFTEAQAEAMVTIVFSAGAEVLDVDIEQRRQLEERLVLQLRMISKGAYYWYRREQEKLAASRVE</sequence>
<keyword id="KW-0963">Cytoplasm</keyword>
<keyword id="KW-0238">DNA-binding</keyword>
<keyword id="KW-0275">Fatty acid biosynthesis</keyword>
<keyword id="KW-0276">Fatty acid metabolism</keyword>
<keyword id="KW-0444">Lipid biosynthesis</keyword>
<keyword id="KW-0443">Lipid metabolism</keyword>
<keyword id="KW-0678">Repressor</keyword>
<keyword id="KW-0804">Transcription</keyword>
<keyword id="KW-0805">Transcription regulation</keyword>
<proteinExistence type="inferred from homology"/>
<feature type="chain" id="PRO_0000293582" description="HTH-type transcriptional repressor FabR">
    <location>
        <begin position="1"/>
        <end position="211"/>
    </location>
</feature>
<feature type="domain" description="HTH tetR-type" evidence="1">
    <location>
        <begin position="10"/>
        <end position="70"/>
    </location>
</feature>
<feature type="DNA-binding region" description="H-T-H motif" evidence="1">
    <location>
        <begin position="33"/>
        <end position="52"/>
    </location>
</feature>
<evidence type="ECO:0000255" key="1">
    <source>
        <dbReference type="HAMAP-Rule" id="MF_01190"/>
    </source>
</evidence>
<evidence type="ECO:0000305" key="2"/>
<organism>
    <name type="scientific">Yersinia pseudotuberculosis serotype I (strain IP32953)</name>
    <dbReference type="NCBI Taxonomy" id="273123"/>
    <lineage>
        <taxon>Bacteria</taxon>
        <taxon>Pseudomonadati</taxon>
        <taxon>Pseudomonadota</taxon>
        <taxon>Gammaproteobacteria</taxon>
        <taxon>Enterobacterales</taxon>
        <taxon>Yersiniaceae</taxon>
        <taxon>Yersinia</taxon>
    </lineage>
</organism>
<reference key="1">
    <citation type="journal article" date="2004" name="Proc. Natl. Acad. Sci. U.S.A.">
        <title>Insights into the evolution of Yersinia pestis through whole-genome comparison with Yersinia pseudotuberculosis.</title>
        <authorList>
            <person name="Chain P.S.G."/>
            <person name="Carniel E."/>
            <person name="Larimer F.W."/>
            <person name="Lamerdin J."/>
            <person name="Stoutland P.O."/>
            <person name="Regala W.M."/>
            <person name="Georgescu A.M."/>
            <person name="Vergez L.M."/>
            <person name="Land M.L."/>
            <person name="Motin V.L."/>
            <person name="Brubaker R.R."/>
            <person name="Fowler J."/>
            <person name="Hinnebusch J."/>
            <person name="Marceau M."/>
            <person name="Medigue C."/>
            <person name="Simonet M."/>
            <person name="Chenal-Francisque V."/>
            <person name="Souza B."/>
            <person name="Dacheux D."/>
            <person name="Elliott J.M."/>
            <person name="Derbise A."/>
            <person name="Hauser L.J."/>
            <person name="Garcia E."/>
        </authorList>
    </citation>
    <scope>NUCLEOTIDE SEQUENCE [LARGE SCALE GENOMIC DNA]</scope>
    <source>
        <strain>IP32953</strain>
    </source>
</reference>
<protein>
    <recommendedName>
        <fullName evidence="1">HTH-type transcriptional repressor FabR</fullName>
    </recommendedName>
</protein>
<accession>Q66G60</accession>